<comment type="function">
    <text evidence="1">Microtubule inner protein (MIP) part of the dynein-decorated doublet microtubules (DMTs) of multiciliated respiratory cells and the distal singlet microtubules of monoflagellated spermatozoa (By similarity). Forms an extensive interaction network cross-linking the lumen of axonemal doublet microtubules (By similarity).</text>
</comment>
<comment type="subunit">
    <text evidence="1 2 3">Microtubule inner protein component of sperm flagellar doublet microtubules (By similarity). Interacts with CABP1 and CALR (By similarity). Interacts with INCA1 (PubMed:18756329). Interacts with microtubules (By similarity).</text>
</comment>
<comment type="subcellular location">
    <subcellularLocation>
        <location evidence="1">Cytoplasm</location>
    </subcellularLocation>
    <subcellularLocation>
        <location evidence="1">Cytoplasmic vesicle</location>
        <location evidence="1">Secretory vesicle</location>
        <location evidence="1">Acrosome</location>
    </subcellularLocation>
    <subcellularLocation>
        <location evidence="1">Cytoplasm</location>
        <location evidence="1">Cytoskeleton</location>
        <location evidence="1">Cilium basal body</location>
    </subcellularLocation>
    <subcellularLocation>
        <location evidence="1">Cytoplasm</location>
        <location evidence="1">Cytoskeleton</location>
        <location evidence="1">Flagellum axoneme</location>
    </subcellularLocation>
    <subcellularLocation>
        <location evidence="2">Cytoplasm</location>
        <location evidence="2">Cytoskeleton</location>
        <location evidence="2">Cilium axoneme</location>
    </subcellularLocation>
    <subcellularLocation>
        <location evidence="3">Nucleus</location>
    </subcellularLocation>
    <text evidence="1">In caudal sperms localizes onto sperm head. Is also present on midpiece and principle piece of sperm tails. Acrosome and sperm tail localization is regulated by Y-chromosome.</text>
</comment>
<comment type="tissue specificity">
    <text evidence="3">Testis-specific. Expressed in round spermatids.</text>
</comment>
<evidence type="ECO:0000250" key="1">
    <source>
        <dbReference type="UniProtKB" id="Q7TPM5"/>
    </source>
</evidence>
<evidence type="ECO:0000250" key="2">
    <source>
        <dbReference type="UniProtKB" id="Q96E40"/>
    </source>
</evidence>
<evidence type="ECO:0000269" key="3">
    <source>
    </source>
</evidence>
<evidence type="ECO:0000303" key="4">
    <source>
    </source>
</evidence>
<evidence type="ECO:0000305" key="5"/>
<gene>
    <name type="primary">Spaca9</name>
    <name evidence="4" type="synonym">Rsb66</name>
</gene>
<sequence>MNEVKESLRSIEQKYKLFQQQQFTFIAALEHCRENAHDKIRPISSIEQVQSYMEHYCNNSTDRRILLMFMDICSELNKLCQHFEALHSGTPVTNSLLEKCKTLVSQSNDLSILRAKYPHDVVNHLSCDEARNHYGGVVSLIPIVLDLMKEWIAHSEKLPRKVLQHGTT</sequence>
<protein>
    <recommendedName>
        <fullName>Sperm acrosome-associated protein 9</fullName>
    </recommendedName>
</protein>
<keyword id="KW-0966">Cell projection</keyword>
<keyword id="KW-0969">Cilium</keyword>
<keyword id="KW-0963">Cytoplasm</keyword>
<keyword id="KW-0968">Cytoplasmic vesicle</keyword>
<keyword id="KW-0206">Cytoskeleton</keyword>
<keyword id="KW-0282">Flagellum</keyword>
<keyword id="KW-0539">Nucleus</keyword>
<keyword id="KW-1185">Reference proteome</keyword>
<feature type="chain" id="PRO_0000445518" description="Sperm acrosome-associated protein 9">
    <location>
        <begin position="1"/>
        <end position="168"/>
    </location>
</feature>
<feature type="site" description="Essential for interaction with INCA1" evidence="3">
    <location>
        <position position="117"/>
    </location>
</feature>
<feature type="site" description="Essential for interaction with INCA1" evidence="3">
    <location>
        <position position="119"/>
    </location>
</feature>
<feature type="mutagenesis site" description="Significantly reduced interaction with INCA1; when associated with A-119." evidence="3">
    <original>Y</original>
    <variation>A</variation>
    <location>
        <position position="117"/>
    </location>
</feature>
<feature type="mutagenesis site" description="Significantly reduced interaction with INCA1; when associated with A-117." evidence="3">
    <original>H</original>
    <variation>A</variation>
    <location>
        <position position="119"/>
    </location>
</feature>
<feature type="sequence conflict" description="In Ref. 1; AAN07900." evidence="5" ref="1">
    <original>Q</original>
    <variation>L</variation>
    <location>
        <position position="48"/>
    </location>
</feature>
<feature type="sequence conflict" description="In Ref. 1; AAN07900." evidence="5" ref="1">
    <original>N</original>
    <variation>I</variation>
    <location>
        <position position="123"/>
    </location>
</feature>
<dbReference type="EMBL" id="AY121839">
    <property type="protein sequence ID" value="AAN07900.1"/>
    <property type="molecule type" value="mRNA"/>
</dbReference>
<dbReference type="EMBL" id="AC129847">
    <property type="status" value="NOT_ANNOTATED_CDS"/>
    <property type="molecule type" value="Genomic_DNA"/>
</dbReference>
<dbReference type="EMBL" id="CH474001">
    <property type="protein sequence ID" value="EDL93400.1"/>
    <property type="molecule type" value="Genomic_DNA"/>
</dbReference>
<dbReference type="EMBL" id="BC097268">
    <property type="protein sequence ID" value="AAH97268.1"/>
    <property type="molecule type" value="mRNA"/>
</dbReference>
<dbReference type="RefSeq" id="NP_859045.2">
    <property type="nucleotide sequence ID" value="NM_181694.3"/>
</dbReference>
<dbReference type="RefSeq" id="XP_063139552.1">
    <property type="nucleotide sequence ID" value="XM_063283482.1"/>
</dbReference>
<dbReference type="SMR" id="Q4V8P4"/>
<dbReference type="FunCoup" id="Q4V8P4">
    <property type="interactions" value="279"/>
</dbReference>
<dbReference type="STRING" id="10116.ENSRNOP00000017004"/>
<dbReference type="PhosphoSitePlus" id="Q4V8P4"/>
<dbReference type="PaxDb" id="10116-ENSRNOP00000017004"/>
<dbReference type="GeneID" id="296610"/>
<dbReference type="KEGG" id="rno:296610"/>
<dbReference type="AGR" id="RGD:727909"/>
<dbReference type="CTD" id="11092"/>
<dbReference type="RGD" id="727909">
    <property type="gene designation" value="Spaca9"/>
</dbReference>
<dbReference type="VEuPathDB" id="HostDB:ENSRNOG00000012697"/>
<dbReference type="eggNOG" id="ENOG502QQV9">
    <property type="taxonomic scope" value="Eukaryota"/>
</dbReference>
<dbReference type="HOGENOM" id="CLU_100443_0_0_1"/>
<dbReference type="InParanoid" id="Q4V8P4"/>
<dbReference type="PhylomeDB" id="Q4V8P4"/>
<dbReference type="TreeFam" id="TF328897"/>
<dbReference type="PRO" id="PR:Q4V8P4"/>
<dbReference type="Proteomes" id="UP000002494">
    <property type="component" value="Chromosome 3"/>
</dbReference>
<dbReference type="Proteomes" id="UP000234681">
    <property type="component" value="Chromosome 3"/>
</dbReference>
<dbReference type="Bgee" id="ENSRNOG00000012697">
    <property type="expression patterns" value="Expressed in testis and 5 other cell types or tissues"/>
</dbReference>
<dbReference type="GO" id="GO:0001669">
    <property type="term" value="C:acrosomal vesicle"/>
    <property type="evidence" value="ECO:0000266"/>
    <property type="project" value="RGD"/>
</dbReference>
<dbReference type="GO" id="GO:0005879">
    <property type="term" value="C:axonemal microtubule"/>
    <property type="evidence" value="ECO:0000250"/>
    <property type="project" value="UniProtKB"/>
</dbReference>
<dbReference type="GO" id="GO:0160110">
    <property type="term" value="C:axonemal microtubule doublet inner sheath"/>
    <property type="evidence" value="ECO:0000250"/>
    <property type="project" value="UniProtKB"/>
</dbReference>
<dbReference type="GO" id="GO:0036064">
    <property type="term" value="C:ciliary basal body"/>
    <property type="evidence" value="ECO:0000250"/>
    <property type="project" value="UniProtKB"/>
</dbReference>
<dbReference type="GO" id="GO:0097546">
    <property type="term" value="C:ciliary base"/>
    <property type="evidence" value="ECO:0000266"/>
    <property type="project" value="RGD"/>
</dbReference>
<dbReference type="GO" id="GO:0005737">
    <property type="term" value="C:cytoplasm"/>
    <property type="evidence" value="ECO:0000314"/>
    <property type="project" value="UniProtKB"/>
</dbReference>
<dbReference type="GO" id="GO:0005881">
    <property type="term" value="C:cytoplasmic microtubule"/>
    <property type="evidence" value="ECO:0000266"/>
    <property type="project" value="RGD"/>
</dbReference>
<dbReference type="GO" id="GO:0005634">
    <property type="term" value="C:nucleus"/>
    <property type="evidence" value="ECO:0000314"/>
    <property type="project" value="UniProtKB"/>
</dbReference>
<dbReference type="GO" id="GO:0036126">
    <property type="term" value="C:sperm flagellum"/>
    <property type="evidence" value="ECO:0000266"/>
    <property type="project" value="RGD"/>
</dbReference>
<dbReference type="GO" id="GO:0048306">
    <property type="term" value="F:calcium-dependent protein binding"/>
    <property type="evidence" value="ECO:0000266"/>
    <property type="project" value="RGD"/>
</dbReference>
<dbReference type="GO" id="GO:0008017">
    <property type="term" value="F:microtubule binding"/>
    <property type="evidence" value="ECO:0000250"/>
    <property type="project" value="UniProtKB"/>
</dbReference>
<dbReference type="GO" id="GO:0035082">
    <property type="term" value="P:axoneme assembly"/>
    <property type="evidence" value="ECO:0000266"/>
    <property type="project" value="RGD"/>
</dbReference>
<dbReference type="GO" id="GO:0030317">
    <property type="term" value="P:flagellated sperm motility"/>
    <property type="evidence" value="ECO:0000266"/>
    <property type="project" value="RGD"/>
</dbReference>
<dbReference type="InterPro" id="IPR027818">
    <property type="entry name" value="SPACA9"/>
</dbReference>
<dbReference type="PANTHER" id="PTHR32455">
    <property type="entry name" value="SPERM ACROSOME-ASSOCIATED PROTEIN 9"/>
    <property type="match status" value="1"/>
</dbReference>
<dbReference type="PANTHER" id="PTHR32455:SF1">
    <property type="entry name" value="SPERM ACROSOME-ASSOCIATED PROTEIN 9"/>
    <property type="match status" value="1"/>
</dbReference>
<dbReference type="Pfam" id="PF15120">
    <property type="entry name" value="SPACA9"/>
    <property type="match status" value="1"/>
</dbReference>
<name>SACA9_RAT</name>
<accession>Q4V8P4</accession>
<accession>Q7TSB9</accession>
<proteinExistence type="evidence at protein level"/>
<reference key="1">
    <citation type="journal article" date="2008" name="Biochem. Cell Biol.">
        <title>A novel testis protein, RSB-66, interacting with INCA1 (inhibitor of Cdk interacting with cyclin A1).</title>
        <authorList>
            <person name="Chen X."/>
            <person name="Hu T."/>
            <person name="Liang G."/>
            <person name="Yang M."/>
            <person name="Zong S."/>
            <person name="Miao S."/>
            <person name="Koide S.S."/>
            <person name="Wang L."/>
        </authorList>
    </citation>
    <scope>NUCLEOTIDE SEQUENCE [MRNA]</scope>
    <scope>SUBCELLULAR LOCATION</scope>
    <scope>INTERACTION WITH INCA1</scope>
    <scope>TISSUE SPECIFICITY</scope>
    <scope>MUTAGENESIS OF TYR-117 AND HIS-119</scope>
    <scope>SITES TYR-117 AND HIS-119</scope>
</reference>
<reference key="2">
    <citation type="journal article" date="2004" name="Nature">
        <title>Genome sequence of the Brown Norway rat yields insights into mammalian evolution.</title>
        <authorList>
            <person name="Gibbs R.A."/>
            <person name="Weinstock G.M."/>
            <person name="Metzker M.L."/>
            <person name="Muzny D.M."/>
            <person name="Sodergren E.J."/>
            <person name="Scherer S."/>
            <person name="Scott G."/>
            <person name="Steffen D."/>
            <person name="Worley K.C."/>
            <person name="Burch P.E."/>
            <person name="Okwuonu G."/>
            <person name="Hines S."/>
            <person name="Lewis L."/>
            <person name="Deramo C."/>
            <person name="Delgado O."/>
            <person name="Dugan-Rocha S."/>
            <person name="Miner G."/>
            <person name="Morgan M."/>
            <person name="Hawes A."/>
            <person name="Gill R."/>
            <person name="Holt R.A."/>
            <person name="Adams M.D."/>
            <person name="Amanatides P.G."/>
            <person name="Baden-Tillson H."/>
            <person name="Barnstead M."/>
            <person name="Chin S."/>
            <person name="Evans C.A."/>
            <person name="Ferriera S."/>
            <person name="Fosler C."/>
            <person name="Glodek A."/>
            <person name="Gu Z."/>
            <person name="Jennings D."/>
            <person name="Kraft C.L."/>
            <person name="Nguyen T."/>
            <person name="Pfannkoch C.M."/>
            <person name="Sitter C."/>
            <person name="Sutton G.G."/>
            <person name="Venter J.C."/>
            <person name="Woodage T."/>
            <person name="Smith D."/>
            <person name="Lee H.-M."/>
            <person name="Gustafson E."/>
            <person name="Cahill P."/>
            <person name="Kana A."/>
            <person name="Doucette-Stamm L."/>
            <person name="Weinstock K."/>
            <person name="Fechtel K."/>
            <person name="Weiss R.B."/>
            <person name="Dunn D.M."/>
            <person name="Green E.D."/>
            <person name="Blakesley R.W."/>
            <person name="Bouffard G.G."/>
            <person name="De Jong P.J."/>
            <person name="Osoegawa K."/>
            <person name="Zhu B."/>
            <person name="Marra M."/>
            <person name="Schein J."/>
            <person name="Bosdet I."/>
            <person name="Fjell C."/>
            <person name="Jones S."/>
            <person name="Krzywinski M."/>
            <person name="Mathewson C."/>
            <person name="Siddiqui A."/>
            <person name="Wye N."/>
            <person name="McPherson J."/>
            <person name="Zhao S."/>
            <person name="Fraser C.M."/>
            <person name="Shetty J."/>
            <person name="Shatsman S."/>
            <person name="Geer K."/>
            <person name="Chen Y."/>
            <person name="Abramzon S."/>
            <person name="Nierman W.C."/>
            <person name="Havlak P.H."/>
            <person name="Chen R."/>
            <person name="Durbin K.J."/>
            <person name="Egan A."/>
            <person name="Ren Y."/>
            <person name="Song X.-Z."/>
            <person name="Li B."/>
            <person name="Liu Y."/>
            <person name="Qin X."/>
            <person name="Cawley S."/>
            <person name="Cooney A.J."/>
            <person name="D'Souza L.M."/>
            <person name="Martin K."/>
            <person name="Wu J.Q."/>
            <person name="Gonzalez-Garay M.L."/>
            <person name="Jackson A.R."/>
            <person name="Kalafus K.J."/>
            <person name="McLeod M.P."/>
            <person name="Milosavljevic A."/>
            <person name="Virk D."/>
            <person name="Volkov A."/>
            <person name="Wheeler D.A."/>
            <person name="Zhang Z."/>
            <person name="Bailey J.A."/>
            <person name="Eichler E.E."/>
            <person name="Tuzun E."/>
            <person name="Birney E."/>
            <person name="Mongin E."/>
            <person name="Ureta-Vidal A."/>
            <person name="Woodwark C."/>
            <person name="Zdobnov E."/>
            <person name="Bork P."/>
            <person name="Suyama M."/>
            <person name="Torrents D."/>
            <person name="Alexandersson M."/>
            <person name="Trask B.J."/>
            <person name="Young J.M."/>
            <person name="Huang H."/>
            <person name="Wang H."/>
            <person name="Xing H."/>
            <person name="Daniels S."/>
            <person name="Gietzen D."/>
            <person name="Schmidt J."/>
            <person name="Stevens K."/>
            <person name="Vitt U."/>
            <person name="Wingrove J."/>
            <person name="Camara F."/>
            <person name="Mar Alba M."/>
            <person name="Abril J.F."/>
            <person name="Guigo R."/>
            <person name="Smit A."/>
            <person name="Dubchak I."/>
            <person name="Rubin E.M."/>
            <person name="Couronne O."/>
            <person name="Poliakov A."/>
            <person name="Huebner N."/>
            <person name="Ganten D."/>
            <person name="Goesele C."/>
            <person name="Hummel O."/>
            <person name="Kreitler T."/>
            <person name="Lee Y.-A."/>
            <person name="Monti J."/>
            <person name="Schulz H."/>
            <person name="Zimdahl H."/>
            <person name="Himmelbauer H."/>
            <person name="Lehrach H."/>
            <person name="Jacob H.J."/>
            <person name="Bromberg S."/>
            <person name="Gullings-Handley J."/>
            <person name="Jensen-Seaman M.I."/>
            <person name="Kwitek A.E."/>
            <person name="Lazar J."/>
            <person name="Pasko D."/>
            <person name="Tonellato P.J."/>
            <person name="Twigger S."/>
            <person name="Ponting C.P."/>
            <person name="Duarte J.M."/>
            <person name="Rice S."/>
            <person name="Goodstadt L."/>
            <person name="Beatson S.A."/>
            <person name="Emes R.D."/>
            <person name="Winter E.E."/>
            <person name="Webber C."/>
            <person name="Brandt P."/>
            <person name="Nyakatura G."/>
            <person name="Adetobi M."/>
            <person name="Chiaromonte F."/>
            <person name="Elnitski L."/>
            <person name="Eswara P."/>
            <person name="Hardison R.C."/>
            <person name="Hou M."/>
            <person name="Kolbe D."/>
            <person name="Makova K."/>
            <person name="Miller W."/>
            <person name="Nekrutenko A."/>
            <person name="Riemer C."/>
            <person name="Schwartz S."/>
            <person name="Taylor J."/>
            <person name="Yang S."/>
            <person name="Zhang Y."/>
            <person name="Lindpaintner K."/>
            <person name="Andrews T.D."/>
            <person name="Caccamo M."/>
            <person name="Clamp M."/>
            <person name="Clarke L."/>
            <person name="Curwen V."/>
            <person name="Durbin R.M."/>
            <person name="Eyras E."/>
            <person name="Searle S.M."/>
            <person name="Cooper G.M."/>
            <person name="Batzoglou S."/>
            <person name="Brudno M."/>
            <person name="Sidow A."/>
            <person name="Stone E.A."/>
            <person name="Payseur B.A."/>
            <person name="Bourque G."/>
            <person name="Lopez-Otin C."/>
            <person name="Puente X.S."/>
            <person name="Chakrabarti K."/>
            <person name="Chatterji S."/>
            <person name="Dewey C."/>
            <person name="Pachter L."/>
            <person name="Bray N."/>
            <person name="Yap V.B."/>
            <person name="Caspi A."/>
            <person name="Tesler G."/>
            <person name="Pevzner P.A."/>
            <person name="Haussler D."/>
            <person name="Roskin K.M."/>
            <person name="Baertsch R."/>
            <person name="Clawson H."/>
            <person name="Furey T.S."/>
            <person name="Hinrichs A.S."/>
            <person name="Karolchik D."/>
            <person name="Kent W.J."/>
            <person name="Rosenbloom K.R."/>
            <person name="Trumbower H."/>
            <person name="Weirauch M."/>
            <person name="Cooper D.N."/>
            <person name="Stenson P.D."/>
            <person name="Ma B."/>
            <person name="Brent M."/>
            <person name="Arumugam M."/>
            <person name="Shteynberg D."/>
            <person name="Copley R.R."/>
            <person name="Taylor M.S."/>
            <person name="Riethman H."/>
            <person name="Mudunuri U."/>
            <person name="Peterson J."/>
            <person name="Guyer M."/>
            <person name="Felsenfeld A."/>
            <person name="Old S."/>
            <person name="Mockrin S."/>
            <person name="Collins F.S."/>
        </authorList>
    </citation>
    <scope>NUCLEOTIDE SEQUENCE [LARGE SCALE GENOMIC DNA]</scope>
    <source>
        <strain>Brown Norway</strain>
    </source>
</reference>
<reference key="3">
    <citation type="submission" date="2005-09" db="EMBL/GenBank/DDBJ databases">
        <authorList>
            <person name="Mural R.J."/>
            <person name="Adams M.D."/>
            <person name="Myers E.W."/>
            <person name="Smith H.O."/>
            <person name="Venter J.C."/>
        </authorList>
    </citation>
    <scope>NUCLEOTIDE SEQUENCE [LARGE SCALE GENOMIC DNA]</scope>
    <source>
        <strain>Brown Norway</strain>
    </source>
</reference>
<reference key="4">
    <citation type="journal article" date="2004" name="Genome Res.">
        <title>The status, quality, and expansion of the NIH full-length cDNA project: the Mammalian Gene Collection (MGC).</title>
        <authorList>
            <consortium name="The MGC Project Team"/>
        </authorList>
    </citation>
    <scope>NUCLEOTIDE SEQUENCE [LARGE SCALE MRNA]</scope>
    <source>
        <tissue>Testis</tissue>
    </source>
</reference>
<organism>
    <name type="scientific">Rattus norvegicus</name>
    <name type="common">Rat</name>
    <dbReference type="NCBI Taxonomy" id="10116"/>
    <lineage>
        <taxon>Eukaryota</taxon>
        <taxon>Metazoa</taxon>
        <taxon>Chordata</taxon>
        <taxon>Craniata</taxon>
        <taxon>Vertebrata</taxon>
        <taxon>Euteleostomi</taxon>
        <taxon>Mammalia</taxon>
        <taxon>Eutheria</taxon>
        <taxon>Euarchontoglires</taxon>
        <taxon>Glires</taxon>
        <taxon>Rodentia</taxon>
        <taxon>Myomorpha</taxon>
        <taxon>Muroidea</taxon>
        <taxon>Muridae</taxon>
        <taxon>Murinae</taxon>
        <taxon>Rattus</taxon>
    </lineage>
</organism>